<feature type="chain" id="PRO_0000225855" description="UPF0145 protein NP_2600A">
    <location>
        <begin position="1"/>
        <end position="104"/>
    </location>
</feature>
<organism>
    <name type="scientific">Natronomonas pharaonis (strain ATCC 35678 / DSM 2160 / CIP 103997 / JCM 8858 / NBRC 14720 / NCIMB 2260 / Gabara)</name>
    <name type="common">Halobacterium pharaonis</name>
    <dbReference type="NCBI Taxonomy" id="348780"/>
    <lineage>
        <taxon>Archaea</taxon>
        <taxon>Methanobacteriati</taxon>
        <taxon>Methanobacteriota</taxon>
        <taxon>Stenosarchaea group</taxon>
        <taxon>Halobacteria</taxon>
        <taxon>Halobacteriales</taxon>
        <taxon>Haloarculaceae</taxon>
        <taxon>Natronomonas</taxon>
    </lineage>
</organism>
<comment type="similarity">
    <text evidence="1">Belongs to the UPF0145 family.</text>
</comment>
<protein>
    <recommendedName>
        <fullName evidence="1">UPF0145 protein NP_2600A</fullName>
    </recommendedName>
</protein>
<sequence>MQTVSTETVPGHETVEALGIARGNTVEARNVGRDITQSIRNITGGELKAYSELLSKARDEALSRMEADAEEMGADAVVNVRLETSKVTDGGSEVIAYGTAVRLR</sequence>
<name>Y2600_NATPD</name>
<proteinExistence type="inferred from homology"/>
<accession>Q3IR53</accession>
<gene>
    <name type="ordered locus">NP_2600A</name>
</gene>
<keyword id="KW-1185">Reference proteome</keyword>
<reference key="1">
    <citation type="journal article" date="2005" name="Genome Res.">
        <title>Living with two extremes: conclusions from the genome sequence of Natronomonas pharaonis.</title>
        <authorList>
            <person name="Falb M."/>
            <person name="Pfeiffer F."/>
            <person name="Palm P."/>
            <person name="Rodewald K."/>
            <person name="Hickmann V."/>
            <person name="Tittor J."/>
            <person name="Oesterhelt D."/>
        </authorList>
    </citation>
    <scope>NUCLEOTIDE SEQUENCE [LARGE SCALE GENOMIC DNA]</scope>
    <source>
        <strain>ATCC 35678 / DSM 2160 / CIP 103997 / JCM 8858 / NBRC 14720 / NCIMB 2260 / Gabara</strain>
    </source>
</reference>
<dbReference type="EMBL" id="CR936257">
    <property type="protein sequence ID" value="CAI49391.1"/>
    <property type="molecule type" value="Genomic_DNA"/>
</dbReference>
<dbReference type="RefSeq" id="WP_011323016.1">
    <property type="nucleotide sequence ID" value="NC_007426.1"/>
</dbReference>
<dbReference type="SMR" id="Q3IR53"/>
<dbReference type="STRING" id="348780.NP_2600A"/>
<dbReference type="EnsemblBacteria" id="CAI49391">
    <property type="protein sequence ID" value="CAI49391"/>
    <property type="gene ID" value="NP_2600A"/>
</dbReference>
<dbReference type="GeneID" id="3701503"/>
<dbReference type="KEGG" id="nph:NP_2600A"/>
<dbReference type="eggNOG" id="arCOG02287">
    <property type="taxonomic scope" value="Archaea"/>
</dbReference>
<dbReference type="HOGENOM" id="CLU_117144_1_2_2"/>
<dbReference type="OrthoDB" id="59443at2157"/>
<dbReference type="Proteomes" id="UP000002698">
    <property type="component" value="Chromosome"/>
</dbReference>
<dbReference type="Gene3D" id="3.30.110.70">
    <property type="entry name" value="Hypothetical protein apc22750. Chain B"/>
    <property type="match status" value="1"/>
</dbReference>
<dbReference type="HAMAP" id="MF_00338">
    <property type="entry name" value="UPF0145"/>
    <property type="match status" value="1"/>
</dbReference>
<dbReference type="InterPro" id="IPR035439">
    <property type="entry name" value="UPF0145_dom_sf"/>
</dbReference>
<dbReference type="InterPro" id="IPR002765">
    <property type="entry name" value="UPF0145_YbjQ-like"/>
</dbReference>
<dbReference type="PANTHER" id="PTHR34068:SF2">
    <property type="entry name" value="UPF0145 PROTEIN SCO3412"/>
    <property type="match status" value="1"/>
</dbReference>
<dbReference type="PANTHER" id="PTHR34068">
    <property type="entry name" value="UPF0145 PROTEIN YBJQ"/>
    <property type="match status" value="1"/>
</dbReference>
<dbReference type="Pfam" id="PF01906">
    <property type="entry name" value="YbjQ_1"/>
    <property type="match status" value="1"/>
</dbReference>
<dbReference type="SUPFAM" id="SSF117782">
    <property type="entry name" value="YbjQ-like"/>
    <property type="match status" value="1"/>
</dbReference>
<evidence type="ECO:0000255" key="1">
    <source>
        <dbReference type="HAMAP-Rule" id="MF_00338"/>
    </source>
</evidence>